<accession>P64372</accession>
<accession>Q99QW5</accession>
<reference key="1">
    <citation type="journal article" date="2001" name="Lancet">
        <title>Whole genome sequencing of meticillin-resistant Staphylococcus aureus.</title>
        <authorList>
            <person name="Kuroda M."/>
            <person name="Ohta T."/>
            <person name="Uchiyama I."/>
            <person name="Baba T."/>
            <person name="Yuzawa H."/>
            <person name="Kobayashi I."/>
            <person name="Cui L."/>
            <person name="Oguchi A."/>
            <person name="Aoki K."/>
            <person name="Nagai Y."/>
            <person name="Lian J.-Q."/>
            <person name="Ito T."/>
            <person name="Kanamori M."/>
            <person name="Matsumaru H."/>
            <person name="Maruyama A."/>
            <person name="Murakami H."/>
            <person name="Hosoyama A."/>
            <person name="Mizutani-Ui Y."/>
            <person name="Takahashi N.K."/>
            <person name="Sawano T."/>
            <person name="Inoue R."/>
            <person name="Kaito C."/>
            <person name="Sekimizu K."/>
            <person name="Hirakawa H."/>
            <person name="Kuhara S."/>
            <person name="Goto S."/>
            <person name="Yabuzaki J."/>
            <person name="Kanehisa M."/>
            <person name="Yamashita A."/>
            <person name="Oshima K."/>
            <person name="Furuya K."/>
            <person name="Yoshino C."/>
            <person name="Shiba T."/>
            <person name="Hattori M."/>
            <person name="Ogasawara N."/>
            <person name="Hayashi H."/>
            <person name="Hiramatsu K."/>
        </authorList>
    </citation>
    <scope>NUCLEOTIDE SEQUENCE [LARGE SCALE GENOMIC DNA]</scope>
    <source>
        <strain>Mu50 / ATCC 700699</strain>
    </source>
</reference>
<comment type="catalytic activity">
    <reaction evidence="1">
        <text>D-erythro-1-(imidazol-4-yl)glycerol 3-phosphate = 3-(imidazol-4-yl)-2-oxopropyl phosphate + H2O</text>
        <dbReference type="Rhea" id="RHEA:11040"/>
        <dbReference type="ChEBI" id="CHEBI:15377"/>
        <dbReference type="ChEBI" id="CHEBI:57766"/>
        <dbReference type="ChEBI" id="CHEBI:58278"/>
        <dbReference type="EC" id="4.2.1.19"/>
    </reaction>
</comment>
<comment type="pathway">
    <text evidence="1">Amino-acid biosynthesis; L-histidine biosynthesis; L-histidine from 5-phospho-alpha-D-ribose 1-diphosphate: step 6/9.</text>
</comment>
<comment type="subcellular location">
    <subcellularLocation>
        <location evidence="1">Cytoplasm</location>
    </subcellularLocation>
</comment>
<comment type="similarity">
    <text evidence="1">Belongs to the imidazoleglycerol-phosphate dehydratase family.</text>
</comment>
<feature type="chain" id="PRO_0000158166" description="Imidazoleglycerol-phosphate dehydratase">
    <location>
        <begin position="1"/>
        <end position="192"/>
    </location>
</feature>
<dbReference type="EC" id="4.2.1.19" evidence="1"/>
<dbReference type="EMBL" id="BA000017">
    <property type="protein sequence ID" value="BAB58838.1"/>
    <property type="molecule type" value="Genomic_DNA"/>
</dbReference>
<dbReference type="RefSeq" id="WP_000640266.1">
    <property type="nucleotide sequence ID" value="NC_002758.2"/>
</dbReference>
<dbReference type="SMR" id="P64372"/>
<dbReference type="KEGG" id="sav:SAV2676"/>
<dbReference type="HOGENOM" id="CLU_044308_3_0_9"/>
<dbReference type="PhylomeDB" id="P64372"/>
<dbReference type="UniPathway" id="UPA00031">
    <property type="reaction ID" value="UER00011"/>
</dbReference>
<dbReference type="Proteomes" id="UP000002481">
    <property type="component" value="Chromosome"/>
</dbReference>
<dbReference type="GO" id="GO:0005737">
    <property type="term" value="C:cytoplasm"/>
    <property type="evidence" value="ECO:0007669"/>
    <property type="project" value="UniProtKB-SubCell"/>
</dbReference>
<dbReference type="GO" id="GO:0004424">
    <property type="term" value="F:imidazoleglycerol-phosphate dehydratase activity"/>
    <property type="evidence" value="ECO:0007669"/>
    <property type="project" value="UniProtKB-UniRule"/>
</dbReference>
<dbReference type="GO" id="GO:0000105">
    <property type="term" value="P:L-histidine biosynthetic process"/>
    <property type="evidence" value="ECO:0007669"/>
    <property type="project" value="UniProtKB-UniRule"/>
</dbReference>
<dbReference type="CDD" id="cd07914">
    <property type="entry name" value="IGPD"/>
    <property type="match status" value="1"/>
</dbReference>
<dbReference type="FunFam" id="3.30.230.40:FF:000001">
    <property type="entry name" value="Imidazoleglycerol-phosphate dehydratase HisB"/>
    <property type="match status" value="1"/>
</dbReference>
<dbReference type="FunFam" id="3.30.230.40:FF:000003">
    <property type="entry name" value="Imidazoleglycerol-phosphate dehydratase HisB"/>
    <property type="match status" value="1"/>
</dbReference>
<dbReference type="Gene3D" id="3.30.230.40">
    <property type="entry name" value="Imidazole glycerol phosphate dehydratase, domain 1"/>
    <property type="match status" value="2"/>
</dbReference>
<dbReference type="HAMAP" id="MF_00076">
    <property type="entry name" value="HisB"/>
    <property type="match status" value="1"/>
</dbReference>
<dbReference type="InterPro" id="IPR038494">
    <property type="entry name" value="IGPD_sf"/>
</dbReference>
<dbReference type="InterPro" id="IPR000807">
    <property type="entry name" value="ImidazoleglycerolP_deHydtase"/>
</dbReference>
<dbReference type="InterPro" id="IPR020565">
    <property type="entry name" value="ImidazoleglycerP_deHydtase_CS"/>
</dbReference>
<dbReference type="InterPro" id="IPR020568">
    <property type="entry name" value="Ribosomal_Su5_D2-typ_SF"/>
</dbReference>
<dbReference type="NCBIfam" id="NF002107">
    <property type="entry name" value="PRK00951.1-2"/>
    <property type="match status" value="1"/>
</dbReference>
<dbReference type="NCBIfam" id="NF002111">
    <property type="entry name" value="PRK00951.2-1"/>
    <property type="match status" value="1"/>
</dbReference>
<dbReference type="NCBIfam" id="NF002114">
    <property type="entry name" value="PRK00951.2-4"/>
    <property type="match status" value="1"/>
</dbReference>
<dbReference type="PANTHER" id="PTHR23133:SF2">
    <property type="entry name" value="IMIDAZOLEGLYCEROL-PHOSPHATE DEHYDRATASE"/>
    <property type="match status" value="1"/>
</dbReference>
<dbReference type="PANTHER" id="PTHR23133">
    <property type="entry name" value="IMIDAZOLEGLYCEROL-PHOSPHATE DEHYDRATASE HIS7"/>
    <property type="match status" value="1"/>
</dbReference>
<dbReference type="Pfam" id="PF00475">
    <property type="entry name" value="IGPD"/>
    <property type="match status" value="1"/>
</dbReference>
<dbReference type="SUPFAM" id="SSF54211">
    <property type="entry name" value="Ribosomal protein S5 domain 2-like"/>
    <property type="match status" value="2"/>
</dbReference>
<dbReference type="PROSITE" id="PS00954">
    <property type="entry name" value="IGP_DEHYDRATASE_1"/>
    <property type="match status" value="1"/>
</dbReference>
<dbReference type="PROSITE" id="PS00955">
    <property type="entry name" value="IGP_DEHYDRATASE_2"/>
    <property type="match status" value="1"/>
</dbReference>
<gene>
    <name evidence="1" type="primary">hisB</name>
    <name type="ordered locus">SAV2676</name>
</gene>
<proteinExistence type="inferred from homology"/>
<name>HIS7_STAAM</name>
<protein>
    <recommendedName>
        <fullName evidence="1">Imidazoleglycerol-phosphate dehydratase</fullName>
        <shortName evidence="1">IGPD</shortName>
        <ecNumber evidence="1">4.2.1.19</ecNumber>
    </recommendedName>
</protein>
<sequence>MIYQKQRNTAETQLNISISDDQSPSHINTGVGFLNHMLTLFTFHSGLSLNIEAQGDIDVDDHHVTEDIGIVIGQLLLEMIKDKKHFVRYGTMYIPMDETLARVVVDISGRPYLSFNASLSKEKVGTFDTELVEEFFRAVVINARLTTHIDLIRGGNTHHEIEAIFKAFSRALGIALTATDDQRVPSSKGVIE</sequence>
<evidence type="ECO:0000255" key="1">
    <source>
        <dbReference type="HAMAP-Rule" id="MF_00076"/>
    </source>
</evidence>
<organism>
    <name type="scientific">Staphylococcus aureus (strain Mu50 / ATCC 700699)</name>
    <dbReference type="NCBI Taxonomy" id="158878"/>
    <lineage>
        <taxon>Bacteria</taxon>
        <taxon>Bacillati</taxon>
        <taxon>Bacillota</taxon>
        <taxon>Bacilli</taxon>
        <taxon>Bacillales</taxon>
        <taxon>Staphylococcaceae</taxon>
        <taxon>Staphylococcus</taxon>
    </lineage>
</organism>
<keyword id="KW-0028">Amino-acid biosynthesis</keyword>
<keyword id="KW-0963">Cytoplasm</keyword>
<keyword id="KW-0368">Histidine biosynthesis</keyword>
<keyword id="KW-0456">Lyase</keyword>